<proteinExistence type="evidence at protein level"/>
<evidence type="ECO:0000250" key="1">
    <source>
        <dbReference type="UniProtKB" id="Q02962"/>
    </source>
</evidence>
<evidence type="ECO:0000255" key="2">
    <source>
        <dbReference type="PROSITE-ProRule" id="PRU00381"/>
    </source>
</evidence>
<evidence type="ECO:0000269" key="3">
    <source>
    </source>
</evidence>
<evidence type="ECO:0000269" key="4">
    <source>
    </source>
</evidence>
<evidence type="ECO:0000303" key="5">
    <source>
    </source>
</evidence>
<evidence type="ECO:0000305" key="6"/>
<reference key="1">
    <citation type="journal article" date="1990" name="Development">
        <title>Pax2, a new murine paired-box-containing gene and its expression in the developing excretory system.</title>
        <authorList>
            <person name="Dressler G.R."/>
            <person name="Deutsch U."/>
            <person name="Chowdhury K."/>
            <person name="Nornes H.O."/>
            <person name="Gruss P."/>
        </authorList>
    </citation>
    <scope>NUCLEOTIDE SEQUENCE [GENOMIC DNA]</scope>
    <source>
        <tissue>Embryo</tissue>
    </source>
</reference>
<reference key="2">
    <citation type="journal article" date="1992" name="Genes Dev.">
        <title>Pax-5 encodes the transcription factor BSAP and is expressed in B lymphocytes, the developing CNS, and adult testis.</title>
        <authorList>
            <person name="Adams B."/>
            <person name="Doerfler P."/>
            <person name="Aguzzi A."/>
            <person name="Kozmik Z."/>
            <person name="Urbanek P."/>
            <person name="Maurer-Fogy I."/>
            <person name="Busslinger M."/>
        </authorList>
    </citation>
    <scope>SEQUENCE REVISION TO 114-115 AND 118</scope>
</reference>
<reference key="3">
    <citation type="journal article" date="2004" name="Genome Res.">
        <title>The status, quality, and expansion of the NIH full-length cDNA project: the Mammalian Gene Collection (MGC).</title>
        <authorList>
            <consortium name="The MGC Project Team"/>
        </authorList>
    </citation>
    <scope>NUCLEOTIDE SEQUENCE [LARGE SCALE MRNA] (ISOFORM SHORT)</scope>
</reference>
<reference key="4">
    <citation type="journal article" date="1990" name="Development">
        <title>Spatially and temporally restricted expression of Pax2 during murine neurogenesis.</title>
        <authorList>
            <person name="Nornes H.O."/>
            <person name="Dressler G.R."/>
            <person name="Knapik E.W."/>
            <person name="Deutsch U."/>
            <person name="Gruss P."/>
        </authorList>
    </citation>
    <scope>DEVELOPMENTAL STAGE</scope>
</reference>
<reference key="5">
    <citation type="journal article" date="1996" name="Proc. Natl. Acad. Sci. U.S.A.">
        <title>The mouse Pax2(1Neu) mutation is identical to a human PAX2 mutation in a family with renal-coloboma syndrome and results in developmental defects of the brain, ear, eye, and kidney.</title>
        <authorList>
            <person name="Favor J."/>
            <person name="Sandulache R."/>
            <person name="Neuhauser-Klaus A."/>
            <person name="Pretsch W."/>
            <person name="Chatterjee B."/>
            <person name="Senft E."/>
            <person name="Wurst W."/>
            <person name="Blanquet V."/>
            <person name="Grimes P."/>
            <person name="Sporle R."/>
            <person name="Schughart K."/>
        </authorList>
    </citation>
    <scope>DISEASE</scope>
</reference>
<dbReference type="EMBL" id="X55781">
    <property type="protein sequence ID" value="CAA39302.1"/>
    <property type="status" value="ALT_SEQ"/>
    <property type="molecule type" value="Genomic_DNA"/>
</dbReference>
<dbReference type="EMBL" id="BC148232">
    <property type="protein sequence ID" value="AAI48233.1"/>
    <property type="molecule type" value="mRNA"/>
</dbReference>
<dbReference type="EMBL" id="BC150484">
    <property type="protein sequence ID" value="AAI50485.1"/>
    <property type="molecule type" value="mRNA"/>
</dbReference>
<dbReference type="PIR" id="A60086">
    <property type="entry name" value="A60086"/>
</dbReference>
<dbReference type="RefSeq" id="NP_035167.4">
    <property type="nucleotide sequence ID" value="NM_011037.4"/>
</dbReference>
<dbReference type="SMR" id="P32114"/>
<dbReference type="BioGRID" id="202029">
    <property type="interactions" value="5"/>
</dbReference>
<dbReference type="FunCoup" id="P32114">
    <property type="interactions" value="104"/>
</dbReference>
<dbReference type="IntAct" id="P32114">
    <property type="interactions" value="1"/>
</dbReference>
<dbReference type="STRING" id="10090.ENSMUSP00000134661"/>
<dbReference type="iPTMnet" id="P32114"/>
<dbReference type="PhosphoSitePlus" id="P32114"/>
<dbReference type="PaxDb" id="10090-ENSMUSP00000004340"/>
<dbReference type="ProteomicsDB" id="294017">
    <molecule id="P32114-1"/>
</dbReference>
<dbReference type="ProteomicsDB" id="294018">
    <molecule id="P32114-2"/>
</dbReference>
<dbReference type="DNASU" id="18504"/>
<dbReference type="GeneID" id="18504"/>
<dbReference type="KEGG" id="mmu:18504"/>
<dbReference type="UCSC" id="uc008hqa.2">
    <molecule id="P32114-2"/>
    <property type="organism name" value="mouse"/>
</dbReference>
<dbReference type="AGR" id="MGI:97486"/>
<dbReference type="CTD" id="5076"/>
<dbReference type="MGI" id="MGI:97486">
    <property type="gene designation" value="Pax2"/>
</dbReference>
<dbReference type="eggNOG" id="KOG3862">
    <property type="taxonomic scope" value="Eukaryota"/>
</dbReference>
<dbReference type="InParanoid" id="P32114"/>
<dbReference type="PhylomeDB" id="P32114"/>
<dbReference type="BioGRID-ORCS" id="18504">
    <property type="hits" value="1 hit in 78 CRISPR screens"/>
</dbReference>
<dbReference type="PRO" id="PR:P32114"/>
<dbReference type="Proteomes" id="UP000000589">
    <property type="component" value="Unplaced"/>
</dbReference>
<dbReference type="RNAct" id="P32114">
    <property type="molecule type" value="protein"/>
</dbReference>
<dbReference type="GO" id="GO:0034451">
    <property type="term" value="C:centriolar satellite"/>
    <property type="evidence" value="ECO:0000250"/>
    <property type="project" value="UniProtKB"/>
</dbReference>
<dbReference type="GO" id="GO:0005815">
    <property type="term" value="C:microtubule organizing center"/>
    <property type="evidence" value="ECO:0000250"/>
    <property type="project" value="UniProtKB"/>
</dbReference>
<dbReference type="GO" id="GO:0005654">
    <property type="term" value="C:nucleoplasm"/>
    <property type="evidence" value="ECO:0000304"/>
    <property type="project" value="Reactome"/>
</dbReference>
<dbReference type="GO" id="GO:0005634">
    <property type="term" value="C:nucleus"/>
    <property type="evidence" value="ECO:0000314"/>
    <property type="project" value="UniProtKB"/>
</dbReference>
<dbReference type="GO" id="GO:0032991">
    <property type="term" value="C:protein-containing complex"/>
    <property type="evidence" value="ECO:0000314"/>
    <property type="project" value="UniProtKB"/>
</dbReference>
<dbReference type="GO" id="GO:0032993">
    <property type="term" value="C:protein-DNA complex"/>
    <property type="evidence" value="ECO:0000314"/>
    <property type="project" value="UniProtKB"/>
</dbReference>
<dbReference type="GO" id="GO:0005667">
    <property type="term" value="C:transcription regulator complex"/>
    <property type="evidence" value="ECO:0000304"/>
    <property type="project" value="MGI"/>
</dbReference>
<dbReference type="GO" id="GO:0070742">
    <property type="term" value="F:C2H2 zinc finger domain binding"/>
    <property type="evidence" value="ECO:0000353"/>
    <property type="project" value="UniProtKB"/>
</dbReference>
<dbReference type="GO" id="GO:0000987">
    <property type="term" value="F:cis-regulatory region sequence-specific DNA binding"/>
    <property type="evidence" value="ECO:0000314"/>
    <property type="project" value="UniProtKB"/>
</dbReference>
<dbReference type="GO" id="GO:0003677">
    <property type="term" value="F:DNA binding"/>
    <property type="evidence" value="ECO:0000314"/>
    <property type="project" value="MGI"/>
</dbReference>
<dbReference type="GO" id="GO:0003700">
    <property type="term" value="F:DNA-binding transcription factor activity"/>
    <property type="evidence" value="ECO:0000250"/>
    <property type="project" value="UniProtKB"/>
</dbReference>
<dbReference type="GO" id="GO:0000981">
    <property type="term" value="F:DNA-binding transcription factor activity, RNA polymerase II-specific"/>
    <property type="evidence" value="ECO:0000314"/>
    <property type="project" value="NTNU_SB"/>
</dbReference>
<dbReference type="GO" id="GO:0000978">
    <property type="term" value="F:RNA polymerase II cis-regulatory region sequence-specific DNA binding"/>
    <property type="evidence" value="ECO:0000314"/>
    <property type="project" value="NTNU_SB"/>
</dbReference>
<dbReference type="GO" id="GO:0000976">
    <property type="term" value="F:transcription cis-regulatory region binding"/>
    <property type="evidence" value="ECO:0000314"/>
    <property type="project" value="UniProtKB"/>
</dbReference>
<dbReference type="GO" id="GO:0048854">
    <property type="term" value="P:brain morphogenesis"/>
    <property type="evidence" value="ECO:0000315"/>
    <property type="project" value="DFLAT"/>
</dbReference>
<dbReference type="GO" id="GO:0001658">
    <property type="term" value="P:branching involved in ureteric bud morphogenesis"/>
    <property type="evidence" value="ECO:0000315"/>
    <property type="project" value="MGI"/>
</dbReference>
<dbReference type="GO" id="GO:0043010">
    <property type="term" value="P:camera-type eye development"/>
    <property type="evidence" value="ECO:0000315"/>
    <property type="project" value="MGI"/>
</dbReference>
<dbReference type="GO" id="GO:0001709">
    <property type="term" value="P:cell fate determination"/>
    <property type="evidence" value="ECO:0000315"/>
    <property type="project" value="MGI"/>
</dbReference>
<dbReference type="GO" id="GO:0071333">
    <property type="term" value="P:cellular response to glucose stimulus"/>
    <property type="evidence" value="ECO:0000315"/>
    <property type="project" value="UniProtKB"/>
</dbReference>
<dbReference type="GO" id="GO:0071260">
    <property type="term" value="P:cellular response to mechanical stimulus"/>
    <property type="evidence" value="ECO:0000270"/>
    <property type="project" value="UniProtKB"/>
</dbReference>
<dbReference type="GO" id="GO:0071300">
    <property type="term" value="P:cellular response to retinoic acid"/>
    <property type="evidence" value="ECO:0000270"/>
    <property type="project" value="UniProtKB"/>
</dbReference>
<dbReference type="GO" id="GO:0007417">
    <property type="term" value="P:central nervous system development"/>
    <property type="evidence" value="ECO:0000270"/>
    <property type="project" value="UniProtKB"/>
</dbReference>
<dbReference type="GO" id="GO:0090102">
    <property type="term" value="P:cochlea development"/>
    <property type="evidence" value="ECO:0000315"/>
    <property type="project" value="DFLAT"/>
</dbReference>
<dbReference type="GO" id="GO:0090103">
    <property type="term" value="P:cochlea morphogenesis"/>
    <property type="evidence" value="ECO:0000315"/>
    <property type="project" value="DFLAT"/>
</dbReference>
<dbReference type="GO" id="GO:0071542">
    <property type="term" value="P:dopaminergic neuron differentiation"/>
    <property type="evidence" value="ECO:0000304"/>
    <property type="project" value="ParkinsonsUK-UCL"/>
</dbReference>
<dbReference type="GO" id="GO:0010001">
    <property type="term" value="P:glial cell differentiation"/>
    <property type="evidence" value="ECO:0000315"/>
    <property type="project" value="DFLAT"/>
</dbReference>
<dbReference type="GO" id="GO:0042472">
    <property type="term" value="P:inner ear morphogenesis"/>
    <property type="evidence" value="ECO:0000315"/>
    <property type="project" value="DFLAT"/>
</dbReference>
<dbReference type="GO" id="GO:0001822">
    <property type="term" value="P:kidney development"/>
    <property type="evidence" value="ECO:0000315"/>
    <property type="project" value="MGI"/>
</dbReference>
<dbReference type="GO" id="GO:0060231">
    <property type="term" value="P:mesenchymal to epithelial transition"/>
    <property type="evidence" value="ECO:0000315"/>
    <property type="project" value="MGI"/>
</dbReference>
<dbReference type="GO" id="GO:0003337">
    <property type="term" value="P:mesenchymal to epithelial transition involved in metanephros morphogenesis"/>
    <property type="evidence" value="ECO:0000270"/>
    <property type="project" value="UniProtKB"/>
</dbReference>
<dbReference type="GO" id="GO:0007501">
    <property type="term" value="P:mesodermal cell fate specification"/>
    <property type="evidence" value="ECO:0000314"/>
    <property type="project" value="UniProtKB"/>
</dbReference>
<dbReference type="GO" id="GO:0072177">
    <property type="term" value="P:mesonephric duct development"/>
    <property type="evidence" value="ECO:0000315"/>
    <property type="project" value="UniProtKB"/>
</dbReference>
<dbReference type="GO" id="GO:0072164">
    <property type="term" value="P:mesonephric tubule development"/>
    <property type="evidence" value="ECO:0000315"/>
    <property type="project" value="UniProtKB"/>
</dbReference>
<dbReference type="GO" id="GO:0072172">
    <property type="term" value="P:mesonephric tubule formation"/>
    <property type="evidence" value="ECO:0000315"/>
    <property type="project" value="UniProtKB"/>
</dbReference>
<dbReference type="GO" id="GO:0001823">
    <property type="term" value="P:mesonephros development"/>
    <property type="evidence" value="ECO:0000315"/>
    <property type="project" value="UniProtKB"/>
</dbReference>
<dbReference type="GO" id="GO:0072205">
    <property type="term" value="P:metanephric collecting duct development"/>
    <property type="evidence" value="ECO:0000315"/>
    <property type="project" value="UniProtKB"/>
</dbReference>
<dbReference type="GO" id="GO:0072221">
    <property type="term" value="P:metanephric distal convoluted tubule development"/>
    <property type="evidence" value="ECO:0000315"/>
    <property type="project" value="UniProtKB"/>
</dbReference>
<dbReference type="GO" id="GO:0072207">
    <property type="term" value="P:metanephric epithelium development"/>
    <property type="evidence" value="ECO:0000270"/>
    <property type="project" value="UniProtKB"/>
</dbReference>
<dbReference type="GO" id="GO:0072162">
    <property type="term" value="P:metanephric mesenchymal cell differentiation"/>
    <property type="evidence" value="ECO:0000315"/>
    <property type="project" value="UniProtKB"/>
</dbReference>
<dbReference type="GO" id="GO:0072075">
    <property type="term" value="P:metanephric mesenchyme development"/>
    <property type="evidence" value="ECO:0000314"/>
    <property type="project" value="UniProtKB"/>
</dbReference>
<dbReference type="GO" id="GO:0072289">
    <property type="term" value="P:metanephric nephron tubule formation"/>
    <property type="evidence" value="ECO:0000315"/>
    <property type="project" value="UniProtKB"/>
</dbReference>
<dbReference type="GO" id="GO:0001656">
    <property type="term" value="P:metanephros development"/>
    <property type="evidence" value="ECO:0000315"/>
    <property type="project" value="MGI"/>
</dbReference>
<dbReference type="GO" id="GO:0043066">
    <property type="term" value="P:negative regulation of apoptotic process"/>
    <property type="evidence" value="ECO:0000315"/>
    <property type="project" value="UniProtKB"/>
</dbReference>
<dbReference type="GO" id="GO:1900215">
    <property type="term" value="P:negative regulation of apoptotic process involved in metanephric collecting duct development"/>
    <property type="evidence" value="ECO:0000315"/>
    <property type="project" value="UniProtKB"/>
</dbReference>
<dbReference type="GO" id="GO:1900218">
    <property type="term" value="P:negative regulation of apoptotic process involved in metanephric nephron tubule development"/>
    <property type="evidence" value="ECO:0000315"/>
    <property type="project" value="UniProtKB"/>
</dbReference>
<dbReference type="GO" id="GO:0045892">
    <property type="term" value="P:negative regulation of DNA-templated transcription"/>
    <property type="evidence" value="ECO:0000250"/>
    <property type="project" value="UniProtKB"/>
</dbReference>
<dbReference type="GO" id="GO:0072305">
    <property type="term" value="P:negative regulation of mesenchymal cell apoptotic process involved in metanephric nephron morphogenesis"/>
    <property type="evidence" value="ECO:0000315"/>
    <property type="project" value="UniProtKB"/>
</dbReference>
<dbReference type="GO" id="GO:1900212">
    <property type="term" value="P:negative regulation of mesenchymal cell apoptotic process involved in metanephros development"/>
    <property type="evidence" value="ECO:0000315"/>
    <property type="project" value="UniProtKB"/>
</dbReference>
<dbReference type="GO" id="GO:0043069">
    <property type="term" value="P:negative regulation of programmed cell death"/>
    <property type="evidence" value="ECO:0000315"/>
    <property type="project" value="MGI"/>
</dbReference>
<dbReference type="GO" id="GO:2000378">
    <property type="term" value="P:negative regulation of reactive oxygen species metabolic process"/>
    <property type="evidence" value="ECO:0000250"/>
    <property type="project" value="UniProtKB"/>
</dbReference>
<dbReference type="GO" id="GO:0000122">
    <property type="term" value="P:negative regulation of transcription by RNA polymerase II"/>
    <property type="evidence" value="ECO:0000316"/>
    <property type="project" value="MGI"/>
</dbReference>
<dbReference type="GO" id="GO:0072179">
    <property type="term" value="P:nephric duct formation"/>
    <property type="evidence" value="ECO:0000314"/>
    <property type="project" value="UniProtKB"/>
</dbReference>
<dbReference type="GO" id="GO:0001843">
    <property type="term" value="P:neural tube closure"/>
    <property type="evidence" value="ECO:0000315"/>
    <property type="project" value="DFLAT"/>
</dbReference>
<dbReference type="GO" id="GO:0061360">
    <property type="term" value="P:optic chiasma development"/>
    <property type="evidence" value="ECO:0000315"/>
    <property type="project" value="DFLAT"/>
</dbReference>
<dbReference type="GO" id="GO:0002072">
    <property type="term" value="P:optic cup morphogenesis involved in camera-type eye development"/>
    <property type="evidence" value="ECO:0000315"/>
    <property type="project" value="DFLAT"/>
</dbReference>
<dbReference type="GO" id="GO:0021554">
    <property type="term" value="P:optic nerve development"/>
    <property type="evidence" value="ECO:0000315"/>
    <property type="project" value="DFLAT"/>
</dbReference>
<dbReference type="GO" id="GO:0021631">
    <property type="term" value="P:optic nerve morphogenesis"/>
    <property type="evidence" value="ECO:0000315"/>
    <property type="project" value="DFLAT"/>
</dbReference>
<dbReference type="GO" id="GO:0021633">
    <property type="term" value="P:optic nerve structural organization"/>
    <property type="evidence" value="ECO:0000315"/>
    <property type="project" value="DFLAT"/>
</dbReference>
<dbReference type="GO" id="GO:0031016">
    <property type="term" value="P:pancreas development"/>
    <property type="evidence" value="ECO:0000270"/>
    <property type="project" value="UniProtKB"/>
</dbReference>
<dbReference type="GO" id="GO:0061205">
    <property type="term" value="P:paramesonephric duct development"/>
    <property type="evidence" value="ECO:0000315"/>
    <property type="project" value="UniProtKB"/>
</dbReference>
<dbReference type="GO" id="GO:0090190">
    <property type="term" value="P:positive regulation of branching involved in ureteric bud morphogenesis"/>
    <property type="evidence" value="ECO:0000315"/>
    <property type="project" value="UniProtKB"/>
</dbReference>
<dbReference type="GO" id="GO:0045893">
    <property type="term" value="P:positive regulation of DNA-templated transcription"/>
    <property type="evidence" value="ECO:0000314"/>
    <property type="project" value="UniProtKB"/>
</dbReference>
<dbReference type="GO" id="GO:0072108">
    <property type="term" value="P:positive regulation of mesenchymal to epithelial transition involved in metanephros morphogenesis"/>
    <property type="evidence" value="ECO:0000316"/>
    <property type="project" value="UniProtKB"/>
</dbReference>
<dbReference type="GO" id="GO:2000594">
    <property type="term" value="P:positive regulation of metanephric DCT cell differentiation"/>
    <property type="evidence" value="ECO:0000315"/>
    <property type="project" value="UniProtKB"/>
</dbReference>
<dbReference type="GO" id="GO:0072300">
    <property type="term" value="P:positive regulation of metanephric glomerulus development"/>
    <property type="evidence" value="ECO:0000315"/>
    <property type="project" value="UniProtKB"/>
</dbReference>
<dbReference type="GO" id="GO:2000597">
    <property type="term" value="P:positive regulation of optic nerve formation"/>
    <property type="evidence" value="ECO:0000315"/>
    <property type="project" value="UniProtKB"/>
</dbReference>
<dbReference type="GO" id="GO:0045944">
    <property type="term" value="P:positive regulation of transcription by RNA polymerase II"/>
    <property type="evidence" value="ECO:0000314"/>
    <property type="project" value="NTNU_SB"/>
</dbReference>
<dbReference type="GO" id="GO:0039003">
    <property type="term" value="P:pronephric field specification"/>
    <property type="evidence" value="ECO:0000270"/>
    <property type="project" value="UniProtKB"/>
</dbReference>
<dbReference type="GO" id="GO:0048793">
    <property type="term" value="P:pronephros development"/>
    <property type="evidence" value="ECO:0000315"/>
    <property type="project" value="UniProtKB"/>
</dbReference>
<dbReference type="GO" id="GO:0042981">
    <property type="term" value="P:regulation of apoptotic process"/>
    <property type="evidence" value="ECO:0000315"/>
    <property type="project" value="UniProtKB"/>
</dbReference>
<dbReference type="GO" id="GO:0072307">
    <property type="term" value="P:regulation of metanephric nephron tubule epithelial cell differentiation"/>
    <property type="evidence" value="ECO:0000315"/>
    <property type="project" value="UniProtKB"/>
</dbReference>
<dbReference type="GO" id="GO:0035566">
    <property type="term" value="P:regulation of metanephros size"/>
    <property type="evidence" value="ECO:0000315"/>
    <property type="project" value="UniProtKB"/>
</dbReference>
<dbReference type="GO" id="GO:0043067">
    <property type="term" value="P:regulation of programmed cell death"/>
    <property type="evidence" value="ECO:0000316"/>
    <property type="project" value="MGI"/>
</dbReference>
<dbReference type="GO" id="GO:0003406">
    <property type="term" value="P:retinal pigment epithelium development"/>
    <property type="evidence" value="ECO:0000315"/>
    <property type="project" value="DFLAT"/>
</dbReference>
<dbReference type="GO" id="GO:0048863">
    <property type="term" value="P:stem cell differentiation"/>
    <property type="evidence" value="ECO:0000314"/>
    <property type="project" value="UniProtKB"/>
</dbReference>
<dbReference type="GO" id="GO:0072189">
    <property type="term" value="P:ureter development"/>
    <property type="evidence" value="ECO:0000315"/>
    <property type="project" value="UniProtKB"/>
</dbReference>
<dbReference type="GO" id="GO:0035799">
    <property type="term" value="P:ureter maturation"/>
    <property type="evidence" value="ECO:0000315"/>
    <property type="project" value="UniProtKB"/>
</dbReference>
<dbReference type="GO" id="GO:0072197">
    <property type="term" value="P:ureter morphogenesis"/>
    <property type="evidence" value="ECO:0000316"/>
    <property type="project" value="MGI"/>
</dbReference>
<dbReference type="GO" id="GO:0001657">
    <property type="term" value="P:ureteric bud development"/>
    <property type="evidence" value="ECO:0000316"/>
    <property type="project" value="MGI"/>
</dbReference>
<dbReference type="GO" id="GO:0001655">
    <property type="term" value="P:urogenital system development"/>
    <property type="evidence" value="ECO:0000315"/>
    <property type="project" value="MGI"/>
</dbReference>
<dbReference type="GO" id="GO:0021650">
    <property type="term" value="P:vestibulocochlear nerve formation"/>
    <property type="evidence" value="ECO:0000315"/>
    <property type="project" value="DFLAT"/>
</dbReference>
<dbReference type="CDD" id="cd00131">
    <property type="entry name" value="PAX"/>
    <property type="match status" value="1"/>
</dbReference>
<dbReference type="FunFam" id="1.10.10.10:FF:000013">
    <property type="entry name" value="Paired box 8 isoform 1"/>
    <property type="match status" value="1"/>
</dbReference>
<dbReference type="FunFam" id="1.10.10.10:FF:000003">
    <property type="entry name" value="Paired box protein Pax-6"/>
    <property type="match status" value="1"/>
</dbReference>
<dbReference type="Gene3D" id="1.10.10.10">
    <property type="entry name" value="Winged helix-like DNA-binding domain superfamily/Winged helix DNA-binding domain"/>
    <property type="match status" value="2"/>
</dbReference>
<dbReference type="InterPro" id="IPR009057">
    <property type="entry name" value="Homeodomain-like_sf"/>
</dbReference>
<dbReference type="InterPro" id="IPR043182">
    <property type="entry name" value="PAIRED_DNA-bd_dom"/>
</dbReference>
<dbReference type="InterPro" id="IPR001523">
    <property type="entry name" value="Paired_dom"/>
</dbReference>
<dbReference type="InterPro" id="IPR022130">
    <property type="entry name" value="Pax2_C"/>
</dbReference>
<dbReference type="InterPro" id="IPR043565">
    <property type="entry name" value="PAX_fam"/>
</dbReference>
<dbReference type="InterPro" id="IPR036388">
    <property type="entry name" value="WH-like_DNA-bd_sf"/>
</dbReference>
<dbReference type="PANTHER" id="PTHR45636:SF19">
    <property type="entry name" value="PAIRED BOX PROTEIN PAX-2"/>
    <property type="match status" value="1"/>
</dbReference>
<dbReference type="PANTHER" id="PTHR45636">
    <property type="entry name" value="PAIRED BOX PROTEIN PAX-6-RELATED-RELATED"/>
    <property type="match status" value="1"/>
</dbReference>
<dbReference type="Pfam" id="PF00292">
    <property type="entry name" value="PAX"/>
    <property type="match status" value="1"/>
</dbReference>
<dbReference type="Pfam" id="PF12403">
    <property type="entry name" value="Pax2_C"/>
    <property type="match status" value="1"/>
</dbReference>
<dbReference type="PRINTS" id="PR00027">
    <property type="entry name" value="PAIREDBOX"/>
</dbReference>
<dbReference type="SMART" id="SM00351">
    <property type="entry name" value="PAX"/>
    <property type="match status" value="1"/>
</dbReference>
<dbReference type="SUPFAM" id="SSF46689">
    <property type="entry name" value="Homeodomain-like"/>
    <property type="match status" value="1"/>
</dbReference>
<dbReference type="PROSITE" id="PS00034">
    <property type="entry name" value="PAIRED_1"/>
    <property type="match status" value="1"/>
</dbReference>
<dbReference type="PROSITE" id="PS51057">
    <property type="entry name" value="PAIRED_2"/>
    <property type="match status" value="1"/>
</dbReference>
<protein>
    <recommendedName>
        <fullName>Paired box protein Pax-2</fullName>
    </recommendedName>
</protein>
<sequence length="414" mass="44580">MDMHCKADPFSAMHRHGGVNQLGGVFVNGRPLPDVVRQRIVELAHQGVRPCDISRQLRVSHGCVSKILGRYYETGSIKPGVIGGSKPKVATPKVVDKIAEYKRQNPTMFAWEIRDRLLAEGICDNDTVPSVSSINRIIRTKVQQPFHPTPDGAGTGVTAPGHTIVPSTASPPVSSASNDPVGSYSINGILGIPRSNGEKRKREEVEVYTDPAHIRGGGGLHLVWTLRDVSEGSVPNGDSQSGVDSLRKHLRADTFTQQQLEALDRVFERPSYPDVFQASEHIKSEQGNEYSLPALTPGLDEVKSSLSASANPELGSNVSGTQTYPVVTGRDMTSTTLPGYPPHVPPTGQGSYPTSTLAGMVPGSEFSGNPYSHPQYTAYNEAWRFSNPALLSSPYYYSAAPRGSAPAAAAYDRH</sequence>
<gene>
    <name type="primary">Pax2</name>
    <name type="synonym">Pax-2</name>
</gene>
<comment type="function">
    <text evidence="1">Transcription factor that may have a role in kidney cell differentiation.</text>
</comment>
<comment type="subunit">
    <text evidence="1">Interacts with ELGN3; the interaction targets PAX2 for destruction. Interacts with TLE4.</text>
</comment>
<comment type="interaction">
    <interactant intactId="EBI-1395232">
        <id>P32114</id>
    </interactant>
    <interactant intactId="EBI-1395317">
        <id>Q6NZQ4</id>
        <label>Paxip1</label>
    </interactant>
    <organismsDiffer>false</organismsDiffer>
    <experiments>3</experiments>
</comment>
<comment type="interaction">
    <interactant intactId="EBI-1395250">
        <id>P32114-2</id>
    </interactant>
    <interactant intactId="EBI-1395317">
        <id>Q6NZQ4</id>
        <label>Paxip1</label>
    </interactant>
    <organismsDiffer>false</organismsDiffer>
    <experiments>2</experiments>
</comment>
<comment type="subcellular location">
    <subcellularLocation>
        <location>Nucleus</location>
    </subcellularLocation>
</comment>
<comment type="alternative products">
    <event type="alternative splicing"/>
    <isoform>
        <id>P32114-1</id>
        <name>Long</name>
        <sequence type="displayed"/>
    </isoform>
    <isoform>
        <id>P32114-2</id>
        <name>Short</name>
        <sequence type="described" ref="VSP_002347"/>
    </isoform>
</comment>
<comment type="tissue specificity">
    <text>Kidney and nephrogenic rests.</text>
</comment>
<comment type="developmental stage">
    <text evidence="3">Expressed in the developing embryo excretory and central nervous systems. In the developing excretory system; expressed in the pronephric tubules and extending nephric duct beginning at day 9 gestation. At 10 dpc, detected in the nephric cord, Wolffian duct and also individual pronephric tubules. At 11 dpc, expressed in the branched ureter and the mesenchymal condensations, at 12 dpc, expression seen in the collecting ducts and condensed mesenchymal cells. At 14-17 dpc, expressed in the perimeter of the growing kidney but expression declines in the more developed glomerular crevices, and at later developmental stages expression in the kidney declines. In the developing CNS; initially expressed in the ventricular zone in two compartments of cells on either side of the sulcus limitans and along the entire rhombencephalon and spinal cord, later is restricted to progeny cells that have migrated to specific regions of the intermediate zone. In the eye, expression is restricted to the ventral half of the optic cup and stalk and later to the optic disk and nerve. In the ear, expression is restricted to regions of the otic vesicle that form neuronal components.</text>
</comment>
<comment type="disease">
    <text evidence="4">Defects in Pax2 are a cause of developmental defects of the kidney, brain, ear and eye.</text>
</comment>
<accession>P32114</accession>
<accession>A7E2R6</accession>
<name>PAX2_MOUSE</name>
<feature type="chain" id="PRO_0000050176" description="Paired box protein Pax-2">
    <location>
        <begin position="1"/>
        <end position="414"/>
    </location>
</feature>
<feature type="DNA-binding region" description="Paired" evidence="2">
    <location>
        <begin position="15"/>
        <end position="141"/>
    </location>
</feature>
<feature type="region of interest" description="PAI subdomain" evidence="2">
    <location>
        <begin position="18"/>
        <end position="74"/>
    </location>
</feature>
<feature type="region of interest" description="RED subdomain" evidence="2">
    <location>
        <begin position="93"/>
        <end position="141"/>
    </location>
</feature>
<feature type="modified residue" description="Phosphothreonine" evidence="1">
    <location>
        <position position="225"/>
    </location>
</feature>
<feature type="splice variant" id="VSP_002347" description="In isoform Short." evidence="5">
    <location>
        <begin position="205"/>
        <end position="227"/>
    </location>
</feature>
<feature type="sequence conflict" description="In Ref. 2; AAI48233/AAI50485." evidence="6" ref="2">
    <original>R</original>
    <variation>PG</variation>
    <location>
        <position position="15"/>
    </location>
</feature>
<feature type="sequence conflict" description="In Ref. 1; CAA39302." evidence="6" ref="1">
    <original>DR</original>
    <variation>AQ</variation>
    <location>
        <begin position="115"/>
        <end position="116"/>
    </location>
</feature>
<feature type="sequence conflict" description="In Ref. 1; CAA39302." evidence="6" ref="1">
    <original>A</original>
    <variation>R</variation>
    <location>
        <position position="119"/>
    </location>
</feature>
<feature type="sequence conflict" description="In Ref. 1; CAA39302." evidence="6" ref="1">
    <original>V</original>
    <variation>L</variation>
    <location>
        <position position="344"/>
    </location>
</feature>
<feature type="sequence conflict" description="In Ref. 1; CAA39302." evidence="6" ref="1">
    <original>GSAPA</original>
    <variation>SAPAAR</variation>
    <location>
        <begin position="403"/>
        <end position="407"/>
    </location>
</feature>
<feature type="sequence conflict" description="In Ref. 2; AAI48233/AAI50485." evidence="6" ref="2">
    <original>A</original>
    <variation>AAA</variation>
    <location>
        <position position="410"/>
    </location>
</feature>
<organism>
    <name type="scientific">Mus musculus</name>
    <name type="common">Mouse</name>
    <dbReference type="NCBI Taxonomy" id="10090"/>
    <lineage>
        <taxon>Eukaryota</taxon>
        <taxon>Metazoa</taxon>
        <taxon>Chordata</taxon>
        <taxon>Craniata</taxon>
        <taxon>Vertebrata</taxon>
        <taxon>Euteleostomi</taxon>
        <taxon>Mammalia</taxon>
        <taxon>Eutheria</taxon>
        <taxon>Euarchontoglires</taxon>
        <taxon>Glires</taxon>
        <taxon>Rodentia</taxon>
        <taxon>Myomorpha</taxon>
        <taxon>Muroidea</taxon>
        <taxon>Muridae</taxon>
        <taxon>Murinae</taxon>
        <taxon>Mus</taxon>
        <taxon>Mus</taxon>
    </lineage>
</organism>
<keyword id="KW-0025">Alternative splicing</keyword>
<keyword id="KW-0217">Developmental protein</keyword>
<keyword id="KW-0221">Differentiation</keyword>
<keyword id="KW-0238">DNA-binding</keyword>
<keyword id="KW-0539">Nucleus</keyword>
<keyword id="KW-0563">Paired box</keyword>
<keyword id="KW-0597">Phosphoprotein</keyword>
<keyword id="KW-1185">Reference proteome</keyword>
<keyword id="KW-0804">Transcription</keyword>
<keyword id="KW-0805">Transcription regulation</keyword>